<keyword id="KW-1003">Cell membrane</keyword>
<keyword id="KW-0966">Cell projection</keyword>
<keyword id="KW-0963">Cytoplasm</keyword>
<keyword id="KW-0968">Cytoplasmic vesicle</keyword>
<keyword id="KW-0210">Decarboxylase</keyword>
<keyword id="KW-0333">Golgi apparatus</keyword>
<keyword id="KW-0449">Lipoprotein</keyword>
<keyword id="KW-0456">Lyase</keyword>
<keyword id="KW-0472">Membrane</keyword>
<keyword id="KW-0530">Neurotransmitter biosynthesis</keyword>
<keyword id="KW-0564">Palmitate</keyword>
<keyword id="KW-0597">Phosphoprotein</keyword>
<keyword id="KW-0663">Pyridoxal phosphate</keyword>
<keyword id="KW-1185">Reference proteome</keyword>
<keyword id="KW-0770">Synapse</keyword>
<comment type="function">
    <text>Catalyzes the production of GABA.</text>
</comment>
<comment type="catalytic activity">
    <reaction>
        <text>L-glutamate + H(+) = 4-aminobutanoate + CO2</text>
        <dbReference type="Rhea" id="RHEA:17785"/>
        <dbReference type="ChEBI" id="CHEBI:15378"/>
        <dbReference type="ChEBI" id="CHEBI:16526"/>
        <dbReference type="ChEBI" id="CHEBI:29985"/>
        <dbReference type="ChEBI" id="CHEBI:59888"/>
        <dbReference type="EC" id="4.1.1.15"/>
    </reaction>
</comment>
<comment type="cofactor">
    <cofactor>
        <name>pyridoxal 5'-phosphate</name>
        <dbReference type="ChEBI" id="CHEBI:597326"/>
    </cofactor>
</comment>
<comment type="subunit">
    <text evidence="1">Homodimer.</text>
</comment>
<comment type="subcellular location">
    <subcellularLocation>
        <location evidence="1">Cytoplasm</location>
        <location evidence="1">Cytosol</location>
    </subcellularLocation>
    <subcellularLocation>
        <location evidence="1">Cytoplasmic vesicle</location>
    </subcellularLocation>
    <subcellularLocation>
        <location evidence="1">Presynaptic cell membrane</location>
        <topology evidence="1">Lipid-anchor</topology>
    </subcellularLocation>
    <subcellularLocation>
        <location evidence="1">Golgi apparatus membrane</location>
        <topology evidence="1">Peripheral membrane protein</topology>
        <orientation evidence="1">Cytoplasmic side</orientation>
    </subcellularLocation>
    <text evidence="1">Associated to cytoplasmic vesicles. In neurons, cytosolic leaflet of Golgi membranes and presynaptic clusters (By similarity).</text>
</comment>
<comment type="PTM">
    <text evidence="1">Phosphorylated; which does not affect kinetic parameters or subcellular location.</text>
</comment>
<comment type="PTM">
    <text evidence="1">Palmitoylated; which is required for presynaptic clustering.</text>
</comment>
<comment type="similarity">
    <text evidence="4">Belongs to the group II decarboxylase family.</text>
</comment>
<feature type="chain" id="PRO_0000231042" description="Glutamate decarboxylase 2">
    <location>
        <begin position="1"/>
        <end position="585"/>
    </location>
</feature>
<feature type="region of interest" description="Disordered" evidence="3">
    <location>
        <begin position="1"/>
        <end position="25"/>
    </location>
</feature>
<feature type="binding site" evidence="1">
    <location>
        <begin position="181"/>
        <end position="183"/>
    </location>
    <ligand>
        <name>substrate</name>
    </ligand>
</feature>
<feature type="binding site" evidence="1">
    <location>
        <position position="558"/>
    </location>
    <ligand>
        <name>substrate</name>
    </ligand>
</feature>
<feature type="modified residue" description="Phosphoserine" evidence="2">
    <location>
        <position position="3"/>
    </location>
</feature>
<feature type="modified residue" description="Phosphoserine" evidence="2">
    <location>
        <position position="6"/>
    </location>
</feature>
<feature type="modified residue" description="Phosphoserine" evidence="2">
    <location>
        <position position="10"/>
    </location>
</feature>
<feature type="modified residue" description="Phosphoserine" evidence="2">
    <location>
        <position position="13"/>
    </location>
</feature>
<feature type="modified residue" description="N6-(pyridoxal phosphate)lysine" evidence="1">
    <location>
        <position position="396"/>
    </location>
</feature>
<feature type="lipid moiety-binding region" description="S-palmitoyl cysteine" evidence="1">
    <location>
        <position position="30"/>
    </location>
</feature>
<feature type="lipid moiety-binding region" description="S-palmitoyl cysteine" evidence="1">
    <location>
        <position position="45"/>
    </location>
</feature>
<proteinExistence type="evidence at transcript level"/>
<dbReference type="EC" id="4.1.1.15"/>
<dbReference type="EMBL" id="DQ060442">
    <property type="protein sequence ID" value="AAY59421.1"/>
    <property type="molecule type" value="mRNA"/>
</dbReference>
<dbReference type="EMBL" id="AB261623">
    <property type="protein sequence ID" value="BAF37948.1"/>
    <property type="molecule type" value="mRNA"/>
</dbReference>
<dbReference type="RefSeq" id="NP_001070907.1">
    <property type="nucleotide sequence ID" value="NM_001077439.1"/>
</dbReference>
<dbReference type="SMR" id="Q4PRC2"/>
<dbReference type="FunCoup" id="Q4PRC2">
    <property type="interactions" value="154"/>
</dbReference>
<dbReference type="STRING" id="9615.ENSCAFP00000006413"/>
<dbReference type="PaxDb" id="9612-ENSCAFP00000006413"/>
<dbReference type="Ensembl" id="ENSCAFT00030027701.1">
    <property type="protein sequence ID" value="ENSCAFP00030024173.1"/>
    <property type="gene ID" value="ENSCAFG00030014888.1"/>
</dbReference>
<dbReference type="Ensembl" id="ENSCAFT00845007030.1">
    <property type="protein sequence ID" value="ENSCAFP00845005606.1"/>
    <property type="gene ID" value="ENSCAFG00845003895.1"/>
</dbReference>
<dbReference type="GeneID" id="487107"/>
<dbReference type="KEGG" id="cfa:487107"/>
<dbReference type="CTD" id="2572"/>
<dbReference type="VEuPathDB" id="HostDB:ENSCAFG00845003895"/>
<dbReference type="eggNOG" id="KOG0629">
    <property type="taxonomic scope" value="Eukaryota"/>
</dbReference>
<dbReference type="GeneTree" id="ENSGT00940000157951"/>
<dbReference type="InParanoid" id="Q4PRC2"/>
<dbReference type="OrthoDB" id="392571at2759"/>
<dbReference type="BRENDA" id="4.1.1.15">
    <property type="organism ID" value="1153"/>
</dbReference>
<dbReference type="Reactome" id="R-CFA-888568">
    <property type="pathway name" value="GABA synthesis"/>
</dbReference>
<dbReference type="Reactome" id="R-CFA-888590">
    <property type="pathway name" value="GABA synthesis, release, reuptake and degradation"/>
</dbReference>
<dbReference type="Proteomes" id="UP000002254">
    <property type="component" value="Unplaced"/>
</dbReference>
<dbReference type="Proteomes" id="UP000694429">
    <property type="component" value="Chromosome 2"/>
</dbReference>
<dbReference type="Proteomes" id="UP000694542">
    <property type="component" value="Unplaced"/>
</dbReference>
<dbReference type="Proteomes" id="UP000805418">
    <property type="component" value="Chromosome 2"/>
</dbReference>
<dbReference type="GO" id="GO:0030424">
    <property type="term" value="C:axon"/>
    <property type="evidence" value="ECO:0007669"/>
    <property type="project" value="Ensembl"/>
</dbReference>
<dbReference type="GO" id="GO:0005737">
    <property type="term" value="C:cytoplasm"/>
    <property type="evidence" value="ECO:0000318"/>
    <property type="project" value="GO_Central"/>
</dbReference>
<dbReference type="GO" id="GO:0031410">
    <property type="term" value="C:cytoplasmic vesicle"/>
    <property type="evidence" value="ECO:0007669"/>
    <property type="project" value="UniProtKB-KW"/>
</dbReference>
<dbReference type="GO" id="GO:0005829">
    <property type="term" value="C:cytosol"/>
    <property type="evidence" value="ECO:0007669"/>
    <property type="project" value="UniProtKB-SubCell"/>
</dbReference>
<dbReference type="GO" id="GO:0000139">
    <property type="term" value="C:Golgi membrane"/>
    <property type="evidence" value="ECO:0007669"/>
    <property type="project" value="UniProtKB-SubCell"/>
</dbReference>
<dbReference type="GO" id="GO:0042734">
    <property type="term" value="C:presynaptic membrane"/>
    <property type="evidence" value="ECO:0007669"/>
    <property type="project" value="UniProtKB-SubCell"/>
</dbReference>
<dbReference type="GO" id="GO:0004351">
    <property type="term" value="F:glutamate decarboxylase activity"/>
    <property type="evidence" value="ECO:0000318"/>
    <property type="project" value="GO_Central"/>
</dbReference>
<dbReference type="GO" id="GO:0030170">
    <property type="term" value="F:pyridoxal phosphate binding"/>
    <property type="evidence" value="ECO:0007669"/>
    <property type="project" value="InterPro"/>
</dbReference>
<dbReference type="GO" id="GO:0006540">
    <property type="term" value="P:gamma-aminobutyrate shunt"/>
    <property type="evidence" value="ECO:0000318"/>
    <property type="project" value="GO_Central"/>
</dbReference>
<dbReference type="GO" id="GO:0009449">
    <property type="term" value="P:gamma-aminobutyric acid biosynthetic process"/>
    <property type="evidence" value="ECO:0000318"/>
    <property type="project" value="GO_Central"/>
</dbReference>
<dbReference type="CDD" id="cd06450">
    <property type="entry name" value="DOPA_deC_like"/>
    <property type="match status" value="1"/>
</dbReference>
<dbReference type="FunFam" id="3.40.640.10:FF:000016">
    <property type="entry name" value="Glutamate decarboxylase like 1"/>
    <property type="match status" value="1"/>
</dbReference>
<dbReference type="Gene3D" id="3.90.1150.170">
    <property type="match status" value="1"/>
</dbReference>
<dbReference type="Gene3D" id="3.40.640.10">
    <property type="entry name" value="Type I PLP-dependent aspartate aminotransferase-like (Major domain)"/>
    <property type="match status" value="1"/>
</dbReference>
<dbReference type="InterPro" id="IPR002129">
    <property type="entry name" value="PyrdxlP-dep_de-COase"/>
</dbReference>
<dbReference type="InterPro" id="IPR015424">
    <property type="entry name" value="PyrdxlP-dep_Trfase"/>
</dbReference>
<dbReference type="InterPro" id="IPR015421">
    <property type="entry name" value="PyrdxlP-dep_Trfase_major"/>
</dbReference>
<dbReference type="InterPro" id="IPR021115">
    <property type="entry name" value="Pyridoxal-P_BS"/>
</dbReference>
<dbReference type="PANTHER" id="PTHR45677:SF11">
    <property type="entry name" value="GLUTAMATE DECARBOXYLASE 2"/>
    <property type="match status" value="1"/>
</dbReference>
<dbReference type="PANTHER" id="PTHR45677">
    <property type="entry name" value="GLUTAMATE DECARBOXYLASE-RELATED"/>
    <property type="match status" value="1"/>
</dbReference>
<dbReference type="Pfam" id="PF00282">
    <property type="entry name" value="Pyridoxal_deC"/>
    <property type="match status" value="1"/>
</dbReference>
<dbReference type="SUPFAM" id="SSF53383">
    <property type="entry name" value="PLP-dependent transferases"/>
    <property type="match status" value="1"/>
</dbReference>
<dbReference type="PROSITE" id="PS00392">
    <property type="entry name" value="DDC_GAD_HDC_YDC"/>
    <property type="match status" value="1"/>
</dbReference>
<accession>Q4PRC2</accession>
<accession>A0PA84</accession>
<evidence type="ECO:0000250" key="1"/>
<evidence type="ECO:0000250" key="2">
    <source>
        <dbReference type="UniProtKB" id="Q05329"/>
    </source>
</evidence>
<evidence type="ECO:0000256" key="3">
    <source>
        <dbReference type="SAM" id="MobiDB-lite"/>
    </source>
</evidence>
<evidence type="ECO:0000305" key="4"/>
<protein>
    <recommendedName>
        <fullName>Glutamate decarboxylase 2</fullName>
        <ecNumber>4.1.1.15</ecNumber>
    </recommendedName>
    <alternativeName>
        <fullName>65 kDa glutamic acid decarboxylase</fullName>
        <shortName>GAD-65</shortName>
    </alternativeName>
    <alternativeName>
        <fullName>Glutamate decarboxylase 65 kDa isoform</fullName>
    </alternativeName>
</protein>
<organism>
    <name type="scientific">Canis lupus familiaris</name>
    <name type="common">Dog</name>
    <name type="synonym">Canis familiaris</name>
    <dbReference type="NCBI Taxonomy" id="9615"/>
    <lineage>
        <taxon>Eukaryota</taxon>
        <taxon>Metazoa</taxon>
        <taxon>Chordata</taxon>
        <taxon>Craniata</taxon>
        <taxon>Vertebrata</taxon>
        <taxon>Euteleostomi</taxon>
        <taxon>Mammalia</taxon>
        <taxon>Eutheria</taxon>
        <taxon>Laurasiatheria</taxon>
        <taxon>Carnivora</taxon>
        <taxon>Caniformia</taxon>
        <taxon>Canidae</taxon>
        <taxon>Canis</taxon>
    </lineage>
</organism>
<sequence length="585" mass="65419">MASPGSGFWSFGSEDGSGDPENPSTARAWCQVAQKFTGGIGNKLCALLYGDAEKPAESGGSEPPRATSRKAACACNQKPCSCPKAEVNYAFLHATDLLPACDGERPTLAFLQDVMDILLQYVVKSFDRSTKVIDFHYPNELLQEYNWELADQPQNLEEILMHCQTTLKYAIKTGHPRYFNQLSTGLDMVGLAADWLTSTANTNMFTYEIAPVFVLLEYVTLKKMREIIGWPGGSGDGIFSPGGAISNMYAMLIARFKMFPEVKEKGMAAVPRLIAFTSEHSHFSLKKGAAALGIGTDSVILIKCDERGKMVPSDLERRILEAKQKGFVPFLVSATAGTTVYGAFDPLLAVADICKKYKIWMHVDAAWGGGLLMSRKHKWKLSGVERANSVTWNPHKMMGVPLQCSALLVREEGLMQSCNQMHASYLFQQDKHYDLSYDTGDKALQCGRHVDVFKLWLMWRAKGTTGFEAHIDKCLELAEYLYSIIKNREGYEMVFDGKPQHTNVCFWYVPPSLRVLEDNEERMNRLSKVAPVIKARMMEYGTTMVSYQPLGDKVNFFRMVISNPAATHQDIDFLIEEIERLGQDL</sequence>
<name>DCE2_CANLF</name>
<reference key="1">
    <citation type="submission" date="2005-05" db="EMBL/GenBank/DDBJ databases">
        <title>Autoantibodies to recombinant canine GAD65 in canine diabetes mellitus.</title>
        <authorList>
            <person name="Davison L.J."/>
            <person name="Weenink S.M."/>
            <person name="Christie M.R."/>
            <person name="Herrtage M.E."/>
            <person name="Catchpole B."/>
        </authorList>
    </citation>
    <scope>NUCLEOTIDE SEQUENCE [MRNA]</scope>
    <source>
        <tissue>Brain</tissue>
    </source>
</reference>
<reference key="2">
    <citation type="journal article" date="2008" name="J. Vet. Med. Sci.">
        <title>Sequences of canine glutamate decarboxylase (GAD) 1 and GAD2 genes, and variation of their genetic polymorphisms among five dog breeds.</title>
        <authorList>
            <person name="Arata S."/>
            <person name="Hashizume C."/>
            <person name="Kikusui T."/>
            <person name="Takeuchi Y."/>
            <person name="Mori Y."/>
        </authorList>
    </citation>
    <scope>NUCLEOTIDE SEQUENCE [MRNA]</scope>
</reference>
<gene>
    <name type="primary">GAD2</name>
    <name type="synonym">GAD65</name>
</gene>